<accession>Q9TUB3</accession>
<dbReference type="EMBL" id="AF095857">
    <property type="protein sequence ID" value="AAF01350.1"/>
    <property type="molecule type" value="Genomic_DNA"/>
</dbReference>
<dbReference type="RefSeq" id="NP_001013866.1">
    <property type="nucleotide sequence ID" value="NM_001013844.1"/>
</dbReference>
<dbReference type="SMR" id="Q9TUB3"/>
<dbReference type="FunCoup" id="Q9TUB3">
    <property type="interactions" value="140"/>
</dbReference>
<dbReference type="STRING" id="9615.ENSCAFP00000051752"/>
<dbReference type="PaxDb" id="9612-ENSCAFP00000006628"/>
<dbReference type="GeneID" id="484445"/>
<dbReference type="KEGG" id="cfa:484445"/>
<dbReference type="CTD" id="2354"/>
<dbReference type="eggNOG" id="KOG1414">
    <property type="taxonomic scope" value="Eukaryota"/>
</dbReference>
<dbReference type="InParanoid" id="Q9TUB3"/>
<dbReference type="OrthoDB" id="5866312at2759"/>
<dbReference type="Proteomes" id="UP000002254">
    <property type="component" value="Unplaced"/>
</dbReference>
<dbReference type="Proteomes" id="UP000694429">
    <property type="component" value="Unplaced"/>
</dbReference>
<dbReference type="Proteomes" id="UP000694542">
    <property type="component" value="Unplaced"/>
</dbReference>
<dbReference type="Proteomes" id="UP000805418">
    <property type="component" value="Unplaced"/>
</dbReference>
<dbReference type="GO" id="GO:0005634">
    <property type="term" value="C:nucleus"/>
    <property type="evidence" value="ECO:0000318"/>
    <property type="project" value="GO_Central"/>
</dbReference>
<dbReference type="GO" id="GO:0000981">
    <property type="term" value="F:DNA-binding transcription factor activity, RNA polymerase II-specific"/>
    <property type="evidence" value="ECO:0000318"/>
    <property type="project" value="GO_Central"/>
</dbReference>
<dbReference type="GO" id="GO:0000978">
    <property type="term" value="F:RNA polymerase II cis-regulatory region sequence-specific DNA binding"/>
    <property type="evidence" value="ECO:0000318"/>
    <property type="project" value="GO_Central"/>
</dbReference>
<dbReference type="GO" id="GO:0006357">
    <property type="term" value="P:regulation of transcription by RNA polymerase II"/>
    <property type="evidence" value="ECO:0000318"/>
    <property type="project" value="GO_Central"/>
</dbReference>
<dbReference type="CDD" id="cd14721">
    <property type="entry name" value="bZIP_Fos"/>
    <property type="match status" value="1"/>
</dbReference>
<dbReference type="FunFam" id="1.20.5.170:FF:000006">
    <property type="entry name" value="fos-related antigen 2 isoform X1"/>
    <property type="match status" value="1"/>
</dbReference>
<dbReference type="Gene3D" id="1.20.5.170">
    <property type="match status" value="1"/>
</dbReference>
<dbReference type="InterPro" id="IPR000837">
    <property type="entry name" value="AP-1"/>
</dbReference>
<dbReference type="InterPro" id="IPR004827">
    <property type="entry name" value="bZIP"/>
</dbReference>
<dbReference type="InterPro" id="IPR046347">
    <property type="entry name" value="bZIP_sf"/>
</dbReference>
<dbReference type="PANTHER" id="PTHR23351">
    <property type="entry name" value="FOS TRANSCRIPTION FACTOR-RELATED"/>
    <property type="match status" value="1"/>
</dbReference>
<dbReference type="PANTHER" id="PTHR23351:SF3">
    <property type="entry name" value="PROTEIN FOSB"/>
    <property type="match status" value="1"/>
</dbReference>
<dbReference type="Pfam" id="PF00170">
    <property type="entry name" value="bZIP_1"/>
    <property type="match status" value="1"/>
</dbReference>
<dbReference type="PRINTS" id="PR00042">
    <property type="entry name" value="LEUZIPPRFOS"/>
</dbReference>
<dbReference type="SMART" id="SM00338">
    <property type="entry name" value="BRLZ"/>
    <property type="match status" value="1"/>
</dbReference>
<dbReference type="SUPFAM" id="SSF57959">
    <property type="entry name" value="Leucine zipper domain"/>
    <property type="match status" value="1"/>
</dbReference>
<dbReference type="PROSITE" id="PS50217">
    <property type="entry name" value="BZIP"/>
    <property type="match status" value="1"/>
</dbReference>
<dbReference type="PROSITE" id="PS00036">
    <property type="entry name" value="BZIP_BASIC"/>
    <property type="match status" value="1"/>
</dbReference>
<feature type="chain" id="PRO_0000076475" description="Protein FosB">
    <location>
        <begin position="1"/>
        <end position="338"/>
    </location>
</feature>
<feature type="domain" description="bZIP" evidence="4">
    <location>
        <begin position="155"/>
        <end position="218"/>
    </location>
</feature>
<feature type="region of interest" description="Disordered" evidence="5">
    <location>
        <begin position="1"/>
        <end position="54"/>
    </location>
</feature>
<feature type="region of interest" description="Disordered" evidence="5">
    <location>
        <begin position="80"/>
        <end position="162"/>
    </location>
</feature>
<feature type="region of interest" description="Basic motif" evidence="4">
    <location>
        <begin position="157"/>
        <end position="182"/>
    </location>
</feature>
<feature type="region of interest" description="Leucine-zipper" evidence="4">
    <location>
        <begin position="183"/>
        <end position="211"/>
    </location>
</feature>
<feature type="region of interest" description="Disordered" evidence="5">
    <location>
        <begin position="222"/>
        <end position="271"/>
    </location>
</feature>
<feature type="region of interest" description="Disordered" evidence="5">
    <location>
        <begin position="315"/>
        <end position="338"/>
    </location>
</feature>
<feature type="compositionally biased region" description="Polar residues" evidence="5">
    <location>
        <begin position="13"/>
        <end position="31"/>
    </location>
</feature>
<feature type="compositionally biased region" description="Gly residues" evidence="5">
    <location>
        <begin position="113"/>
        <end position="124"/>
    </location>
</feature>
<feature type="compositionally biased region" description="Low complexity" evidence="5">
    <location>
        <begin position="125"/>
        <end position="137"/>
    </location>
</feature>
<feature type="compositionally biased region" description="Pro residues" evidence="5">
    <location>
        <begin position="256"/>
        <end position="265"/>
    </location>
</feature>
<feature type="compositionally biased region" description="Polar residues" evidence="5">
    <location>
        <begin position="318"/>
        <end position="338"/>
    </location>
</feature>
<feature type="modified residue" description="Phosphoserine" evidence="2">
    <location>
        <position position="27"/>
    </location>
</feature>
<feature type="disulfide bond" description="Interchain (with C-285 in JUND)" evidence="3">
    <location>
        <position position="172"/>
    </location>
</feature>
<comment type="function">
    <text evidence="2 3">Heterodimerizes with proteins of the JUN family to form an AP-1 transcription factor complex, thereby enhancing their DNA binding activity to an AP-1 consensus sequence 5'-TGA[GC]TCA-3' and enhancing their transcriptional activity (By similarity). Exhibits transactivation activity in vitro (By similarity). As part of the AP-1 complex, facilitates enhancer selection together with cell-type-specific transcription factors by collaboratively binding to nucleosomal enhancers and recruiting the SWI/SNF (BAF) chromatin remodeling complex to establish accessible chromatin (By similarity). Together with JUN, plays a role in activation-induced cell death of T cells by binding to the AP-1 promoter site of FASLG/CD95L, and inducing its transcription in response to activation of the TCR/CD3 signaling pathway (By similarity). Involved in the display of nurturing behavior towards newborns (By similarity). May play a role in neurogenesis in the hippocampus and in learning and memory-related tasks by regulating the expression of various genes involved in neurogenesis, depression and epilepsy (By similarity). Implicated in behavioral responses related to morphine reward and spatial memory (By similarity).</text>
</comment>
<comment type="subunit">
    <text evidence="2">Heterodimer; binds to DNA as heterodimer (By similarity). Component of an AP-1 transcription factor complex; composed of FOS-JUN heterodimers (By similarity). As part of the AP-1 transcription factor complex, forms heterodimers with JUN, JUNB or JUND, thereby binding to the AP-1 consensus sequence and stimulating transcription (By similarity). Interacts with the BAF multiprotein chromatin-remodeling complex subunits SMARCB1 and SMARCD1 (By similarity). Interacts with ARID1A and JUN (By similarity).</text>
</comment>
<comment type="subcellular location">
    <subcellularLocation>
        <location evidence="2">Nucleus</location>
    </subcellularLocation>
</comment>
<comment type="domain">
    <text evidence="3">Binds DNA via bZIP domain; DNA-binding is under control of cellular redox homeostasis (in vitro) (By similarity). To enable DNA binding, the bZIP domain must undergo a conformational rearrangement which requires the reduction of the interchain disulfide bond between FosB and JunD (in vitro) (By similarity). The bZIP domain is able to form homomeric oligomers via formation of interchain disulfide bonds under non-reducing conditions (in vitro) (By similarity). Under reducing conditions, the disulfide-bonded homomeric species dissociates into monomers (in vitro) (By similarity).</text>
</comment>
<comment type="PTM">
    <text evidence="1">Phosphorylated.</text>
</comment>
<comment type="similarity">
    <text evidence="6">Belongs to the bZIP family. Fos subfamily.</text>
</comment>
<reference key="1">
    <citation type="submission" date="1998-09" db="EMBL/GenBank/DDBJ databases">
        <title>Genomic sequence of the canine fosB gene.</title>
        <authorList>
            <person name="Myeong H.K."/>
            <person name="Park C.K."/>
        </authorList>
    </citation>
    <scope>NUCLEOTIDE SEQUENCE [GENOMIC DNA]</scope>
    <source>
        <strain>Sapsari</strain>
    </source>
</reference>
<protein>
    <recommendedName>
        <fullName evidence="6">Protein FosB</fullName>
    </recommendedName>
    <alternativeName>
        <fullName evidence="6">Transcription factor AP-1 subunit FosB</fullName>
    </alternativeName>
</protein>
<evidence type="ECO:0000250" key="1">
    <source>
        <dbReference type="UniProtKB" id="D3ZLB7"/>
    </source>
</evidence>
<evidence type="ECO:0000250" key="2">
    <source>
        <dbReference type="UniProtKB" id="P13346"/>
    </source>
</evidence>
<evidence type="ECO:0000250" key="3">
    <source>
        <dbReference type="UniProtKB" id="P53539"/>
    </source>
</evidence>
<evidence type="ECO:0000255" key="4">
    <source>
        <dbReference type="PROSITE-ProRule" id="PRU00978"/>
    </source>
</evidence>
<evidence type="ECO:0000256" key="5">
    <source>
        <dbReference type="SAM" id="MobiDB-lite"/>
    </source>
</evidence>
<evidence type="ECO:0000305" key="6"/>
<proteinExistence type="inferred from homology"/>
<organism>
    <name type="scientific">Canis lupus familiaris</name>
    <name type="common">Dog</name>
    <name type="synonym">Canis familiaris</name>
    <dbReference type="NCBI Taxonomy" id="9615"/>
    <lineage>
        <taxon>Eukaryota</taxon>
        <taxon>Metazoa</taxon>
        <taxon>Chordata</taxon>
        <taxon>Craniata</taxon>
        <taxon>Vertebrata</taxon>
        <taxon>Euteleostomi</taxon>
        <taxon>Mammalia</taxon>
        <taxon>Eutheria</taxon>
        <taxon>Laurasiatheria</taxon>
        <taxon>Carnivora</taxon>
        <taxon>Caniformia</taxon>
        <taxon>Canidae</taxon>
        <taxon>Canis</taxon>
    </lineage>
</organism>
<name>FOSB_CANLF</name>
<gene>
    <name type="primary">FOSB</name>
</gene>
<keyword id="KW-1015">Disulfide bond</keyword>
<keyword id="KW-0238">DNA-binding</keyword>
<keyword id="KW-0539">Nucleus</keyword>
<keyword id="KW-0597">Phosphoprotein</keyword>
<keyword id="KW-1185">Reference proteome</keyword>
<sequence>MFQAFPGDYDSGSRCSSSPSAESQYLSSVDSFGSPPTAAASQECAGLGEMPGSFVPTVTAITTSQDLQWLVQPTLISSMAQSQGQPLASQPPAVDPYDMPGTSYSTPGMSGYSSGGASGSGGPSTSGTTSGPGPARPARARLRRPREETLTPEEEEKRRVRRERNKLAAAKCRNRRRELTDRLQAETDQLEEEKAELESEIAELQKEKERLEFVLVAHKPGCKIPYEEGPGPGPLAEVRDLPGSASTKEDGFSWLLPPPPAPPLPFQTSQDAAPNLTASLFTHSEVQVLGDPFPVVNPSYTSSFVLTCPEVSAFAGTQRPSGSDQPTDPLNSPSLLAL</sequence>